<name>AC4CH_SALPA</name>
<dbReference type="EC" id="3.5.1.135" evidence="2"/>
<dbReference type="EMBL" id="CP000026">
    <property type="protein sequence ID" value="AAV78759.1"/>
    <property type="molecule type" value="Genomic_DNA"/>
</dbReference>
<dbReference type="RefSeq" id="WP_001182976.1">
    <property type="nucleotide sequence ID" value="NC_006511.1"/>
</dbReference>
<dbReference type="SMR" id="Q5PJF2"/>
<dbReference type="KEGG" id="spt:SPA2918"/>
<dbReference type="HOGENOM" id="CLU_152586_0_0_6"/>
<dbReference type="Proteomes" id="UP000008185">
    <property type="component" value="Chromosome"/>
</dbReference>
<dbReference type="GO" id="GO:0005829">
    <property type="term" value="C:cytosol"/>
    <property type="evidence" value="ECO:0007669"/>
    <property type="project" value="TreeGrafter"/>
</dbReference>
<dbReference type="GO" id="GO:0016813">
    <property type="term" value="F:hydrolase activity, acting on carbon-nitrogen (but not peptide) bonds, in linear amidines"/>
    <property type="evidence" value="ECO:0007669"/>
    <property type="project" value="UniProtKB-UniRule"/>
</dbReference>
<dbReference type="GO" id="GO:0106251">
    <property type="term" value="F:N4-acetylcytidine amidohydrolase activity"/>
    <property type="evidence" value="ECO:0007669"/>
    <property type="project" value="RHEA"/>
</dbReference>
<dbReference type="CDD" id="cd06552">
    <property type="entry name" value="ASCH_yqfb_like"/>
    <property type="match status" value="1"/>
</dbReference>
<dbReference type="FunFam" id="2.30.130.30:FF:000001">
    <property type="entry name" value="UPF0267 protein YqfB"/>
    <property type="match status" value="1"/>
</dbReference>
<dbReference type="Gene3D" id="2.30.130.30">
    <property type="entry name" value="Hypothetical protein"/>
    <property type="match status" value="1"/>
</dbReference>
<dbReference type="HAMAP" id="MF_00684">
    <property type="entry name" value="ac4C_amidohydr"/>
    <property type="match status" value="1"/>
</dbReference>
<dbReference type="InterPro" id="IPR008314">
    <property type="entry name" value="AC4CH"/>
</dbReference>
<dbReference type="InterPro" id="IPR007374">
    <property type="entry name" value="ASCH_domain"/>
</dbReference>
<dbReference type="InterPro" id="IPR015947">
    <property type="entry name" value="PUA-like_sf"/>
</dbReference>
<dbReference type="NCBIfam" id="NF003443">
    <property type="entry name" value="PRK04980.1"/>
    <property type="match status" value="1"/>
</dbReference>
<dbReference type="PANTHER" id="PTHR38088">
    <property type="entry name" value="UCP029143 FAMILY PROTEIN"/>
    <property type="match status" value="1"/>
</dbReference>
<dbReference type="PANTHER" id="PTHR38088:SF2">
    <property type="entry name" value="UCP029143 FAMILY PROTEIN"/>
    <property type="match status" value="1"/>
</dbReference>
<dbReference type="Pfam" id="PF04266">
    <property type="entry name" value="ASCH"/>
    <property type="match status" value="1"/>
</dbReference>
<dbReference type="PIRSF" id="PIRSF029143">
    <property type="entry name" value="UCP029143"/>
    <property type="match status" value="1"/>
</dbReference>
<dbReference type="SMART" id="SM01022">
    <property type="entry name" value="ASCH"/>
    <property type="match status" value="1"/>
</dbReference>
<dbReference type="SUPFAM" id="SSF88697">
    <property type="entry name" value="PUA domain-like"/>
    <property type="match status" value="1"/>
</dbReference>
<feature type="chain" id="PRO_1000044952" description="N(4)-acetylcytidine amidohydrolase">
    <location>
        <begin position="1"/>
        <end position="103"/>
    </location>
</feature>
<feature type="domain" description="ASCH" evidence="1">
    <location>
        <begin position="6"/>
        <end position="94"/>
    </location>
</feature>
<feature type="active site" description="Proton acceptor" evidence="2">
    <location>
        <position position="21"/>
    </location>
</feature>
<feature type="active site" description="Nucleophile" evidence="2">
    <location>
        <position position="24"/>
    </location>
</feature>
<feature type="active site" description="Proton donor" evidence="2">
    <location>
        <position position="74"/>
    </location>
</feature>
<organism>
    <name type="scientific">Salmonella paratyphi A (strain ATCC 9150 / SARB42)</name>
    <dbReference type="NCBI Taxonomy" id="295319"/>
    <lineage>
        <taxon>Bacteria</taxon>
        <taxon>Pseudomonadati</taxon>
        <taxon>Pseudomonadota</taxon>
        <taxon>Gammaproteobacteria</taxon>
        <taxon>Enterobacterales</taxon>
        <taxon>Enterobacteriaceae</taxon>
        <taxon>Salmonella</taxon>
    </lineage>
</organism>
<sequence>MQPNDITFFQRFQNDILAGRKTITIRDASESHFKAGDVLRVGRFEDDGYFCTIEVTGTSTVTLDTLNEKHAQQENMSLDELKRVIAEIYPNQTQFYVIDFKCL</sequence>
<protein>
    <recommendedName>
        <fullName evidence="2">N(4)-acetylcytidine amidohydrolase</fullName>
        <shortName evidence="2">ac4C amidohydrolase</shortName>
        <ecNumber evidence="2">3.5.1.135</ecNumber>
    </recommendedName>
</protein>
<accession>Q5PJF2</accession>
<evidence type="ECO:0000255" key="1"/>
<evidence type="ECO:0000255" key="2">
    <source>
        <dbReference type="HAMAP-Rule" id="MF_00684"/>
    </source>
</evidence>
<gene>
    <name type="primary">yqfB</name>
    <name type="ordered locus">SPA2918</name>
</gene>
<proteinExistence type="inferred from homology"/>
<keyword id="KW-0378">Hydrolase</keyword>
<comment type="function">
    <text evidence="2">Catalyzes the hydrolysis of N(4)-acetylcytidine (ac4C).</text>
</comment>
<comment type="catalytic activity">
    <reaction evidence="2">
        <text>N(4)-acetylcytidine + H2O = cytidine + acetate + H(+)</text>
        <dbReference type="Rhea" id="RHEA:62932"/>
        <dbReference type="ChEBI" id="CHEBI:15377"/>
        <dbReference type="ChEBI" id="CHEBI:15378"/>
        <dbReference type="ChEBI" id="CHEBI:17562"/>
        <dbReference type="ChEBI" id="CHEBI:30089"/>
        <dbReference type="ChEBI" id="CHEBI:70989"/>
        <dbReference type="EC" id="3.5.1.135"/>
    </reaction>
</comment>
<comment type="catalytic activity">
    <reaction evidence="2">
        <text>N(4)-acetyl-2'-deoxycytidine + H2O = 2'-deoxycytidine + acetate + H(+)</text>
        <dbReference type="Rhea" id="RHEA:62936"/>
        <dbReference type="ChEBI" id="CHEBI:15377"/>
        <dbReference type="ChEBI" id="CHEBI:15378"/>
        <dbReference type="ChEBI" id="CHEBI:15698"/>
        <dbReference type="ChEBI" id="CHEBI:30089"/>
        <dbReference type="ChEBI" id="CHEBI:146133"/>
        <dbReference type="EC" id="3.5.1.135"/>
    </reaction>
</comment>
<comment type="catalytic activity">
    <reaction evidence="2">
        <text>N(4)-acetylcytosine + H2O = cytosine + acetate + H(+)</text>
        <dbReference type="Rhea" id="RHEA:62940"/>
        <dbReference type="ChEBI" id="CHEBI:15377"/>
        <dbReference type="ChEBI" id="CHEBI:15378"/>
        <dbReference type="ChEBI" id="CHEBI:16040"/>
        <dbReference type="ChEBI" id="CHEBI:30089"/>
        <dbReference type="ChEBI" id="CHEBI:146134"/>
        <dbReference type="EC" id="3.5.1.135"/>
    </reaction>
</comment>
<comment type="similarity">
    <text evidence="2">Belongs to the N(4)-acetylcytidine amidohydrolase family.</text>
</comment>
<reference key="1">
    <citation type="journal article" date="2004" name="Nat. Genet.">
        <title>Comparison of genome degradation in Paratyphi A and Typhi, human-restricted serovars of Salmonella enterica that cause typhoid.</title>
        <authorList>
            <person name="McClelland M."/>
            <person name="Sanderson K.E."/>
            <person name="Clifton S.W."/>
            <person name="Latreille P."/>
            <person name="Porwollik S."/>
            <person name="Sabo A."/>
            <person name="Meyer R."/>
            <person name="Bieri T."/>
            <person name="Ozersky P."/>
            <person name="McLellan M."/>
            <person name="Harkins C.R."/>
            <person name="Wang C."/>
            <person name="Nguyen C."/>
            <person name="Berghoff A."/>
            <person name="Elliott G."/>
            <person name="Kohlberg S."/>
            <person name="Strong C."/>
            <person name="Du F."/>
            <person name="Carter J."/>
            <person name="Kremizki C."/>
            <person name="Layman D."/>
            <person name="Leonard S."/>
            <person name="Sun H."/>
            <person name="Fulton L."/>
            <person name="Nash W."/>
            <person name="Miner T."/>
            <person name="Minx P."/>
            <person name="Delehaunty K."/>
            <person name="Fronick C."/>
            <person name="Magrini V."/>
            <person name="Nhan M."/>
            <person name="Warren W."/>
            <person name="Florea L."/>
            <person name="Spieth J."/>
            <person name="Wilson R.K."/>
        </authorList>
    </citation>
    <scope>NUCLEOTIDE SEQUENCE [LARGE SCALE GENOMIC DNA]</scope>
    <source>
        <strain>ATCC 9150 / SARB42</strain>
    </source>
</reference>